<feature type="chain" id="PRO_1000052127" description="Large ribosomal subunit protein uL3">
    <location>
        <begin position="1"/>
        <end position="215"/>
    </location>
</feature>
<feature type="region of interest" description="Disordered" evidence="2">
    <location>
        <begin position="136"/>
        <end position="155"/>
    </location>
</feature>
<feature type="modified residue" description="N5-methylglutamine" evidence="1">
    <location>
        <position position="151"/>
    </location>
</feature>
<reference key="1">
    <citation type="submission" date="2007-09" db="EMBL/GenBank/DDBJ databases">
        <title>Complete genome sequence of Rickettsia canadensis.</title>
        <authorList>
            <person name="Madan A."/>
            <person name="Fahey J."/>
            <person name="Helton E."/>
            <person name="Ketteman M."/>
            <person name="Madan A."/>
            <person name="Rodrigues S."/>
            <person name="Sanchez A."/>
            <person name="Whiting M."/>
            <person name="Dasch G."/>
            <person name="Eremeeva M."/>
        </authorList>
    </citation>
    <scope>NUCLEOTIDE SEQUENCE [LARGE SCALE GENOMIC DNA]</scope>
    <source>
        <strain>McKiel</strain>
    </source>
</reference>
<name>RL3_RICCK</name>
<keyword id="KW-0488">Methylation</keyword>
<keyword id="KW-0687">Ribonucleoprotein</keyword>
<keyword id="KW-0689">Ribosomal protein</keyword>
<keyword id="KW-0694">RNA-binding</keyword>
<keyword id="KW-0699">rRNA-binding</keyword>
<protein>
    <recommendedName>
        <fullName evidence="1">Large ribosomal subunit protein uL3</fullName>
    </recommendedName>
    <alternativeName>
        <fullName evidence="3">50S ribosomal protein L3</fullName>
    </alternativeName>
</protein>
<sequence length="215" mass="23672">MRTGIIAQKIGMTSVFNDKGERIALTLVKVDDCQVVGHKTLEKHGYNALVIGVKDKKISRVTKPMKQVFANAKISPKTKLKEFRISEENFIDVAASLEVDHFMAGQFVDITAITIGKGFAGSMKRHNFRGLEASHGVSISHRSHGSTGQRQDPGKVFKGKKMAGHMGCNQVTIQNLKIFAVDKDRKLIMIQGSIPGHKNSYLSIKDAIKKISITI</sequence>
<organism>
    <name type="scientific">Rickettsia canadensis (strain McKiel)</name>
    <dbReference type="NCBI Taxonomy" id="293613"/>
    <lineage>
        <taxon>Bacteria</taxon>
        <taxon>Pseudomonadati</taxon>
        <taxon>Pseudomonadota</taxon>
        <taxon>Alphaproteobacteria</taxon>
        <taxon>Rickettsiales</taxon>
        <taxon>Rickettsiaceae</taxon>
        <taxon>Rickettsieae</taxon>
        <taxon>Rickettsia</taxon>
        <taxon>belli group</taxon>
    </lineage>
</organism>
<dbReference type="EMBL" id="CP000409">
    <property type="protein sequence ID" value="ABV73799.1"/>
    <property type="molecule type" value="Genomic_DNA"/>
</dbReference>
<dbReference type="RefSeq" id="WP_012148994.1">
    <property type="nucleotide sequence ID" value="NC_009879.1"/>
</dbReference>
<dbReference type="SMR" id="A8EZL6"/>
<dbReference type="STRING" id="293613.A1E_04370"/>
<dbReference type="KEGG" id="rcm:A1E_04370"/>
<dbReference type="eggNOG" id="COG0087">
    <property type="taxonomic scope" value="Bacteria"/>
</dbReference>
<dbReference type="HOGENOM" id="CLU_044142_2_0_5"/>
<dbReference type="Proteomes" id="UP000007056">
    <property type="component" value="Chromosome"/>
</dbReference>
<dbReference type="GO" id="GO:1990904">
    <property type="term" value="C:ribonucleoprotein complex"/>
    <property type="evidence" value="ECO:0007669"/>
    <property type="project" value="UniProtKB-KW"/>
</dbReference>
<dbReference type="GO" id="GO:0005840">
    <property type="term" value="C:ribosome"/>
    <property type="evidence" value="ECO:0007669"/>
    <property type="project" value="UniProtKB-KW"/>
</dbReference>
<dbReference type="GO" id="GO:0019843">
    <property type="term" value="F:rRNA binding"/>
    <property type="evidence" value="ECO:0007669"/>
    <property type="project" value="UniProtKB-UniRule"/>
</dbReference>
<dbReference type="GO" id="GO:0003735">
    <property type="term" value="F:structural constituent of ribosome"/>
    <property type="evidence" value="ECO:0007669"/>
    <property type="project" value="InterPro"/>
</dbReference>
<dbReference type="GO" id="GO:0006412">
    <property type="term" value="P:translation"/>
    <property type="evidence" value="ECO:0007669"/>
    <property type="project" value="UniProtKB-UniRule"/>
</dbReference>
<dbReference type="FunFam" id="2.40.30.10:FF:000004">
    <property type="entry name" value="50S ribosomal protein L3"/>
    <property type="match status" value="1"/>
</dbReference>
<dbReference type="Gene3D" id="3.30.160.810">
    <property type="match status" value="1"/>
</dbReference>
<dbReference type="Gene3D" id="2.40.30.10">
    <property type="entry name" value="Translation factors"/>
    <property type="match status" value="1"/>
</dbReference>
<dbReference type="HAMAP" id="MF_01325_B">
    <property type="entry name" value="Ribosomal_uL3_B"/>
    <property type="match status" value="1"/>
</dbReference>
<dbReference type="InterPro" id="IPR000597">
    <property type="entry name" value="Ribosomal_uL3"/>
</dbReference>
<dbReference type="InterPro" id="IPR019927">
    <property type="entry name" value="Ribosomal_uL3_bac/org-type"/>
</dbReference>
<dbReference type="InterPro" id="IPR019926">
    <property type="entry name" value="Ribosomal_uL3_CS"/>
</dbReference>
<dbReference type="InterPro" id="IPR009000">
    <property type="entry name" value="Transl_B-barrel_sf"/>
</dbReference>
<dbReference type="NCBIfam" id="TIGR03625">
    <property type="entry name" value="L3_bact"/>
    <property type="match status" value="1"/>
</dbReference>
<dbReference type="PANTHER" id="PTHR11229">
    <property type="entry name" value="50S RIBOSOMAL PROTEIN L3"/>
    <property type="match status" value="1"/>
</dbReference>
<dbReference type="PANTHER" id="PTHR11229:SF16">
    <property type="entry name" value="LARGE RIBOSOMAL SUBUNIT PROTEIN UL3C"/>
    <property type="match status" value="1"/>
</dbReference>
<dbReference type="Pfam" id="PF00297">
    <property type="entry name" value="Ribosomal_L3"/>
    <property type="match status" value="1"/>
</dbReference>
<dbReference type="SUPFAM" id="SSF50447">
    <property type="entry name" value="Translation proteins"/>
    <property type="match status" value="1"/>
</dbReference>
<dbReference type="PROSITE" id="PS00474">
    <property type="entry name" value="RIBOSOMAL_L3"/>
    <property type="match status" value="1"/>
</dbReference>
<accession>A8EZL6</accession>
<evidence type="ECO:0000255" key="1">
    <source>
        <dbReference type="HAMAP-Rule" id="MF_01325"/>
    </source>
</evidence>
<evidence type="ECO:0000256" key="2">
    <source>
        <dbReference type="SAM" id="MobiDB-lite"/>
    </source>
</evidence>
<evidence type="ECO:0000305" key="3"/>
<comment type="function">
    <text evidence="1">One of the primary rRNA binding proteins, it binds directly near the 3'-end of the 23S rRNA, where it nucleates assembly of the 50S subunit.</text>
</comment>
<comment type="subunit">
    <text evidence="1">Part of the 50S ribosomal subunit. Forms a cluster with proteins L14 and L19.</text>
</comment>
<comment type="PTM">
    <text evidence="1">Methylated by PrmB.</text>
</comment>
<comment type="similarity">
    <text evidence="1">Belongs to the universal ribosomal protein uL3 family.</text>
</comment>
<gene>
    <name evidence="1" type="primary">rplC</name>
    <name type="ordered locus">A1E_04370</name>
</gene>
<proteinExistence type="inferred from homology"/>